<gene>
    <name evidence="12" type="primary">AQP</name>
    <name evidence="13" type="ORF">PF3D7_1132800</name>
</gene>
<feature type="chain" id="PRO_0000460636" description="Aquaglyceroporin">
    <location>
        <begin position="1"/>
        <end position="258"/>
    </location>
</feature>
<feature type="topological domain" description="Cytoplasmic" evidence="11">
    <location>
        <begin position="1"/>
        <end position="11"/>
    </location>
</feature>
<feature type="transmembrane region" description="Helical" evidence="3">
    <location>
        <begin position="12"/>
        <end position="32"/>
    </location>
</feature>
<feature type="topological domain" description="Extracellular" evidence="11">
    <location>
        <begin position="33"/>
        <end position="45"/>
    </location>
</feature>
<feature type="transmembrane region" description="Helical" evidence="3">
    <location>
        <begin position="46"/>
        <end position="66"/>
    </location>
</feature>
<feature type="topological domain" description="Cytoplasmic" evidence="11">
    <location>
        <begin position="67"/>
        <end position="87"/>
    </location>
</feature>
<feature type="transmembrane region" description="Helical" evidence="3">
    <location>
        <begin position="88"/>
        <end position="108"/>
    </location>
</feature>
<feature type="topological domain" description="Extracellular" evidence="11">
    <location>
        <begin position="109"/>
        <end position="135"/>
    </location>
</feature>
<feature type="transmembrane region" description="Helical" evidence="3">
    <location>
        <begin position="136"/>
        <end position="156"/>
    </location>
</feature>
<feature type="topological domain" description="Cytoplasmic" evidence="11">
    <location>
        <begin position="157"/>
        <end position="171"/>
    </location>
</feature>
<feature type="transmembrane region" description="Helical" evidence="3">
    <location>
        <begin position="172"/>
        <end position="192"/>
    </location>
</feature>
<feature type="topological domain" description="Extracellular" evidence="11">
    <location>
        <begin position="193"/>
        <end position="217"/>
    </location>
</feature>
<feature type="transmembrane region" description="Helical" evidence="3">
    <location>
        <begin position="218"/>
        <end position="238"/>
    </location>
</feature>
<feature type="topological domain" description="Cytoplasmic" evidence="11">
    <location>
        <begin position="239"/>
        <end position="258"/>
    </location>
</feature>
<feature type="binding site" evidence="7 15">
    <location>
        <position position="66"/>
    </location>
    <ligand>
        <name>glycerol</name>
        <dbReference type="ChEBI" id="CHEBI:17754"/>
    </ligand>
</feature>
<feature type="binding site" evidence="7 15">
    <location>
        <position position="67"/>
    </location>
    <ligand>
        <name>glycerol</name>
        <dbReference type="ChEBI" id="CHEBI:17754"/>
    </ligand>
</feature>
<feature type="binding site" evidence="7 15">
    <location>
        <position position="70"/>
    </location>
    <ligand>
        <name>glycerol</name>
        <dbReference type="ChEBI" id="CHEBI:17754"/>
    </ligand>
</feature>
<feature type="binding site" evidence="7 15">
    <location>
        <position position="127"/>
    </location>
    <ligand>
        <name>glycerol</name>
        <dbReference type="ChEBI" id="CHEBI:17754"/>
    </ligand>
</feature>
<feature type="binding site" evidence="7 15">
    <location>
        <position position="189"/>
    </location>
    <ligand>
        <name>glycerol</name>
        <dbReference type="ChEBI" id="CHEBI:17754"/>
    </ligand>
</feature>
<feature type="binding site" evidence="7 15">
    <location>
        <position position="190"/>
    </location>
    <ligand>
        <name>glycerol</name>
        <dbReference type="ChEBI" id="CHEBI:17754"/>
    </ligand>
</feature>
<feature type="binding site" evidence="7 15">
    <location>
        <position position="193"/>
    </location>
    <ligand>
        <name>glycerol</name>
        <dbReference type="ChEBI" id="CHEBI:17754"/>
    </ligand>
</feature>
<feature type="binding site" evidence="7 15">
    <location>
        <position position="196"/>
    </location>
    <ligand>
        <name>glycerol</name>
        <dbReference type="ChEBI" id="CHEBI:17754"/>
    </ligand>
</feature>
<feature type="mutagenesis site" description="Reduces stability and abolishes transport activity; when associated with 130-L-A-131." evidence="5">
    <original>LA</original>
    <variation>PS</variation>
    <location>
        <begin position="71"/>
        <end position="72"/>
    </location>
</feature>
<feature type="mutagenesis site" description="No significant effects on transport activity; when associated with A-131." evidence="5">
    <original>L</original>
    <variation>P</variation>
    <location>
        <position position="71"/>
    </location>
</feature>
<feature type="mutagenesis site" description="Reduces stability and abolishes transport activity; when associated with 71-P-S-72." evidence="5">
    <original>PS</original>
    <variation>LA</variation>
    <location>
        <begin position="130"/>
        <end position="131"/>
    </location>
</feature>
<feature type="mutagenesis site" description="No significant effects on transport activity; when associated with P-71." evidence="5">
    <original>S</original>
    <variation>A</variation>
    <location>
        <position position="131"/>
    </location>
</feature>
<feature type="helix" evidence="16">
    <location>
        <begin position="9"/>
        <end position="36"/>
    </location>
</feature>
<feature type="strand" evidence="16">
    <location>
        <begin position="37"/>
        <end position="39"/>
    </location>
</feature>
<feature type="helix" evidence="16">
    <location>
        <begin position="43"/>
        <end position="65"/>
    </location>
</feature>
<feature type="helix" evidence="16">
    <location>
        <begin position="71"/>
        <end position="79"/>
    </location>
</feature>
<feature type="helix" evidence="16">
    <location>
        <begin position="85"/>
        <end position="87"/>
    </location>
</feature>
<feature type="helix" evidence="16">
    <location>
        <begin position="88"/>
        <end position="109"/>
    </location>
</feature>
<feature type="helix" evidence="16">
    <location>
        <begin position="111"/>
        <end position="115"/>
    </location>
</feature>
<feature type="helix" evidence="16">
    <location>
        <begin position="134"/>
        <end position="156"/>
    </location>
</feature>
<feature type="helix" evidence="16">
    <location>
        <begin position="158"/>
        <end position="161"/>
    </location>
</feature>
<feature type="helix" evidence="16">
    <location>
        <begin position="166"/>
        <end position="188"/>
    </location>
</feature>
<feature type="helix" evidence="16">
    <location>
        <begin position="194"/>
        <end position="208"/>
    </location>
</feature>
<feature type="helix" evidence="16">
    <location>
        <begin position="211"/>
        <end position="218"/>
    </location>
</feature>
<feature type="helix" evidence="16">
    <location>
        <begin position="221"/>
        <end position="240"/>
    </location>
</feature>
<feature type="helix" evidence="16">
    <location>
        <begin position="242"/>
        <end position="248"/>
    </location>
</feature>
<evidence type="ECO:0000250" key="1">
    <source>
        <dbReference type="UniProtKB" id="A0A509APT1"/>
    </source>
</evidence>
<evidence type="ECO:0000250" key="2">
    <source>
        <dbReference type="UniProtKB" id="P55087"/>
    </source>
</evidence>
<evidence type="ECO:0000255" key="3"/>
<evidence type="ECO:0000255" key="4">
    <source>
        <dbReference type="RuleBase" id="RU000477"/>
    </source>
</evidence>
<evidence type="ECO:0000269" key="5">
    <source>
    </source>
</evidence>
<evidence type="ECO:0000269" key="6">
    <source>
    </source>
</evidence>
<evidence type="ECO:0000269" key="7">
    <source>
    </source>
</evidence>
<evidence type="ECO:0000303" key="8">
    <source>
    </source>
</evidence>
<evidence type="ECO:0000303" key="9">
    <source>
    </source>
</evidence>
<evidence type="ECO:0000303" key="10">
    <source>
    </source>
</evidence>
<evidence type="ECO:0000305" key="11"/>
<evidence type="ECO:0000312" key="12">
    <source>
        <dbReference type="EMBL" id="CAC88373.1"/>
    </source>
</evidence>
<evidence type="ECO:0000312" key="13">
    <source>
        <dbReference type="EMBL" id="CZT98990.1"/>
    </source>
</evidence>
<evidence type="ECO:0000312" key="14">
    <source>
        <dbReference type="Proteomes" id="UP000001450"/>
    </source>
</evidence>
<evidence type="ECO:0007744" key="15">
    <source>
        <dbReference type="PDB" id="3C02"/>
    </source>
</evidence>
<evidence type="ECO:0007829" key="16">
    <source>
        <dbReference type="PDB" id="3C02"/>
    </source>
</evidence>
<accession>Q8II36</accession>
<accession>Q8WPZ6</accession>
<reference evidence="12" key="1">
    <citation type="journal article" date="2002" name="J. Biol. Chem.">
        <title>A single, bi-functional aquaglyceroporin in blood-stage Plasmodium falciparum malaria parasites.</title>
        <authorList>
            <person name="Hansen M."/>
            <person name="Kun J.F."/>
            <person name="Schultz J.E."/>
            <person name="Beitz E."/>
        </authorList>
    </citation>
    <scope>NUCLEOTIDE SEQUENCE [GENOMIC DNA]</scope>
    <scope>FUNCTION</scope>
    <scope>TRANSPORTER ACTIVITY</scope>
    <scope>DEVELOPMENTAL STAGE</scope>
    <scope>DOMAIN</scope>
    <scope>MUTAGENESIS OF 71-LEU-ALA-72; LEU-71; 130-PRO-SER-131 AND SER-131</scope>
</reference>
<reference evidence="14" key="2">
    <citation type="journal article" date="2002" name="Nature">
        <title>Genome sequence of the human malaria parasite Plasmodium falciparum.</title>
        <authorList>
            <person name="Gardner M.J."/>
            <person name="Hall N."/>
            <person name="Fung E."/>
            <person name="White O."/>
            <person name="Berriman M."/>
            <person name="Hyman R.W."/>
            <person name="Carlton J.M."/>
            <person name="Pain A."/>
            <person name="Nelson K.E."/>
            <person name="Bowman S."/>
            <person name="Paulsen I.T."/>
            <person name="James K.D."/>
            <person name="Eisen J.A."/>
            <person name="Rutherford K.M."/>
            <person name="Salzberg S.L."/>
            <person name="Craig A."/>
            <person name="Kyes S."/>
            <person name="Chan M.-S."/>
            <person name="Nene V."/>
            <person name="Shallom S.J."/>
            <person name="Suh B."/>
            <person name="Peterson J."/>
            <person name="Angiuoli S."/>
            <person name="Pertea M."/>
            <person name="Allen J."/>
            <person name="Selengut J."/>
            <person name="Haft D."/>
            <person name="Mather M.W."/>
            <person name="Vaidya A.B."/>
            <person name="Martin D.M.A."/>
            <person name="Fairlamb A.H."/>
            <person name="Fraunholz M.J."/>
            <person name="Roos D.S."/>
            <person name="Ralph S.A."/>
            <person name="McFadden G.I."/>
            <person name="Cummings L.M."/>
            <person name="Subramanian G.M."/>
            <person name="Mungall C."/>
            <person name="Venter J.C."/>
            <person name="Carucci D.J."/>
            <person name="Hoffman S.L."/>
            <person name="Newbold C."/>
            <person name="Davis R.W."/>
            <person name="Fraser C.M."/>
            <person name="Barrell B.G."/>
        </authorList>
    </citation>
    <scope>NUCLEOTIDE SEQUENCE [LARGE SCALE GENOMIC DNA]</scope>
    <source>
        <strain evidence="14">3D7</strain>
    </source>
</reference>
<reference evidence="11" key="3">
    <citation type="journal article" date="2006" name="Mol. Microbiol.">
        <title>Ammonia permeability of the aquaglyceroporins from Plasmodium falciparum, Toxoplasma gondii and Trypansoma brucei.</title>
        <authorList>
            <person name="Zeuthen T."/>
            <person name="Wu B."/>
            <person name="Pavlovic-Djuranovic S."/>
            <person name="Holm L.M."/>
            <person name="Uzcategui N.L."/>
            <person name="Duszenko M."/>
            <person name="Kun J.F."/>
            <person name="Schultz J.E."/>
            <person name="Beitz E."/>
        </authorList>
    </citation>
    <scope>FUNCTION</scope>
    <scope>TRANSPORTER ACTIVITY</scope>
    <source>
        <strain evidence="9">3D7</strain>
    </source>
</reference>
<reference evidence="15" key="4">
    <citation type="journal article" date="2008" name="Nat. Struct. Mol. Biol.">
        <title>Crystal structure of the aquaglyceroporin PfAQP from the malarial parasite Plasmodium falciparum.</title>
        <authorList>
            <person name="Newby Z.E."/>
            <person name="O'Connell J."/>
            <person name="Robles-Colmenares Y."/>
            <person name="Khademi S."/>
            <person name="Miercke L.J."/>
            <person name="Stroud R.M."/>
        </authorList>
    </citation>
    <scope>X-RAY CRYSTALLOGRAPHY (2.05 ANGSTROMS) IN COMPLEX WITH GLYCEROL</scope>
    <scope>FUNCTION</scope>
    <scope>SUBUNIT</scope>
    <scope>DOMAIN</scope>
</reference>
<name>AQP1_PLAF7</name>
<organism evidence="14">
    <name type="scientific">Plasmodium falciparum (isolate 3D7)</name>
    <dbReference type="NCBI Taxonomy" id="36329"/>
    <lineage>
        <taxon>Eukaryota</taxon>
        <taxon>Sar</taxon>
        <taxon>Alveolata</taxon>
        <taxon>Apicomplexa</taxon>
        <taxon>Aconoidasida</taxon>
        <taxon>Haemosporida</taxon>
        <taxon>Plasmodiidae</taxon>
        <taxon>Plasmodium</taxon>
        <taxon>Plasmodium (Laverania)</taxon>
    </lineage>
</organism>
<keyword id="KW-0002">3D-structure</keyword>
<keyword id="KW-1003">Cell membrane</keyword>
<keyword id="KW-0472">Membrane</keyword>
<keyword id="KW-1185">Reference proteome</keyword>
<keyword id="KW-0812">Transmembrane</keyword>
<keyword id="KW-1133">Transmembrane helix</keyword>
<keyword id="KW-0813">Transport</keyword>
<proteinExistence type="evidence at protein level"/>
<protein>
    <recommendedName>
        <fullName evidence="8 9 10">Aquaglyceroporin</fullName>
        <shortName evidence="8 9 10">PfAQP</shortName>
    </recommendedName>
    <alternativeName>
        <fullName evidence="11">Aquaporin-1</fullName>
    </alternativeName>
</protein>
<sequence>MHMLFYKSYVREFIGEFLGTFVLMFLGEGATANFHTTGLSGDWYKLCLGWGLAVFFGILVSAKLSGAHLNLAVSIGLSSINKFDLKKIPVYFFAQLLGAFVGTSTVYGLYHGFISNSKIPQFAWETSRNPSISLTGAFFNELILTGILLLVILVVVDENICGKFHILKLSSVVGLIILCIGITFGGNTGFALNPSRDLGSRFLSLIAYGKDTFTKDNFYFWVPLVAPCVGSVVFCQFYDKVICPLVDLANNEKDGVDL</sequence>
<comment type="function">
    <text evidence="5 6 7">Mediates water and glycerol transport across the cell membrane (PubMed:11729204, PubMed:16889642, PubMed:18500352). Permeable to sugar alcohols of up to five carbons and urea (PubMed:11729204, PubMed:16889642). Permeable to ammonia, methylamine and formamide (PubMed:16889642).</text>
</comment>
<comment type="catalytic activity">
    <reaction evidence="5">
        <text>H2O(in) = H2O(out)</text>
        <dbReference type="Rhea" id="RHEA:29667"/>
        <dbReference type="ChEBI" id="CHEBI:15377"/>
    </reaction>
</comment>
<comment type="catalytic activity">
    <reaction evidence="5 6">
        <text>glycerol(in) = glycerol(out)</text>
        <dbReference type="Rhea" id="RHEA:29675"/>
        <dbReference type="ChEBI" id="CHEBI:17754"/>
    </reaction>
</comment>
<comment type="catalytic activity">
    <reaction evidence="5 6">
        <text>urea(in) = urea(out)</text>
        <dbReference type="Rhea" id="RHEA:32799"/>
        <dbReference type="ChEBI" id="CHEBI:16199"/>
    </reaction>
</comment>
<comment type="catalytic activity">
    <reaction evidence="6">
        <text>NH4(+)(in) = NH4(+)(out)</text>
        <dbReference type="Rhea" id="RHEA:28747"/>
        <dbReference type="ChEBI" id="CHEBI:28938"/>
    </reaction>
</comment>
<comment type="catalytic activity">
    <reaction evidence="6">
        <text>methylamine(out) = methylamine(in)</text>
        <dbReference type="Rhea" id="RHEA:74391"/>
        <dbReference type="ChEBI" id="CHEBI:59338"/>
    </reaction>
</comment>
<comment type="catalytic activity">
    <reaction evidence="6">
        <text>formamide(out) = formamide(in)</text>
        <dbReference type="Rhea" id="RHEA:74387"/>
        <dbReference type="ChEBI" id="CHEBI:16397"/>
    </reaction>
</comment>
<comment type="subunit">
    <text evidence="7">Homotetramer.</text>
</comment>
<comment type="interaction">
    <interactant intactId="EBI-15704431">
        <id>Q8II36</id>
    </interactant>
    <interactant intactId="EBI-15704431">
        <id>Q8II36</id>
        <label>AQP</label>
    </interactant>
    <organismsDiffer>false</organismsDiffer>
    <experiments>2</experiments>
</comment>
<comment type="subcellular location">
    <subcellularLocation>
        <location evidence="1">Cell membrane</location>
        <topology evidence="3">Multi-pass membrane protein</topology>
    </subcellularLocation>
</comment>
<comment type="developmental stage">
    <text evidence="5">Expressed in the ring-stage parasites, trophozoites and schizonts.</text>
</comment>
<comment type="domain">
    <text evidence="2 8 10">Aquaporins contain two tandem repeats each containing three membrane-spanning domains and a pore-forming loop (By similarity). The two canonical Asn-Pro-Ala (NPA) motifs in the pore region, which are highly conserved in aquaporin water channels, are changed to Asn-Leu-Ala (NLA) and Asn-Pro-Ser (NPS), respectively (PubMed:11729204, PubMed:18500352).</text>
</comment>
<comment type="similarity">
    <text evidence="4">Belongs to the MIP/aquaporin (TC 1.A.8) family.</text>
</comment>
<dbReference type="EMBL" id="AJ413249">
    <property type="protein sequence ID" value="CAC88373.1"/>
    <property type="molecule type" value="Genomic_DNA"/>
</dbReference>
<dbReference type="EMBL" id="LN999945">
    <property type="protein sequence ID" value="CZT98990.1"/>
    <property type="molecule type" value="Genomic_DNA"/>
</dbReference>
<dbReference type="RefSeq" id="XP_001348009.1">
    <property type="nucleotide sequence ID" value="XM_001347973.2"/>
</dbReference>
<dbReference type="PDB" id="3C02">
    <property type="method" value="X-ray"/>
    <property type="resolution" value="2.05 A"/>
    <property type="chains" value="A=1-258"/>
</dbReference>
<dbReference type="PDBsum" id="3C02"/>
<dbReference type="SMR" id="Q8II36"/>
<dbReference type="DIP" id="DIP-46381N"/>
<dbReference type="STRING" id="36329.Q8II36"/>
<dbReference type="ChEMBL" id="CHEMBL6073"/>
<dbReference type="TCDB" id="1.A.8.9.13">
    <property type="family name" value="the major intrinsic protein (mip) family"/>
</dbReference>
<dbReference type="SwissPalm" id="Q8II36"/>
<dbReference type="PaxDb" id="5833-PF11_0338"/>
<dbReference type="EnsemblProtists" id="CZT98990">
    <property type="protein sequence ID" value="CZT98990"/>
    <property type="gene ID" value="PF3D7_1132800"/>
</dbReference>
<dbReference type="GeneID" id="810885"/>
<dbReference type="KEGG" id="pfa:PF3D7_1132800"/>
<dbReference type="VEuPathDB" id="PlasmoDB:PF3D7_1132800"/>
<dbReference type="VEuPathDB" id="PlasmoDB:Pf7G8-2_000355600"/>
<dbReference type="VEuPathDB" id="PlasmoDB:Pf7G8_110036700"/>
<dbReference type="VEuPathDB" id="PlasmoDB:PfCD01_110038300"/>
<dbReference type="VEuPathDB" id="PlasmoDB:PfDd2_110036100"/>
<dbReference type="VEuPathDB" id="PlasmoDB:PfGA01_110037100"/>
<dbReference type="VEuPathDB" id="PlasmoDB:PfGB4_110039400"/>
<dbReference type="VEuPathDB" id="PlasmoDB:PfGN01_110037400"/>
<dbReference type="VEuPathDB" id="PlasmoDB:PfHB3_110036300"/>
<dbReference type="VEuPathDB" id="PlasmoDB:PfIT_110037400"/>
<dbReference type="VEuPathDB" id="PlasmoDB:PfKE01_110037400"/>
<dbReference type="VEuPathDB" id="PlasmoDB:PfKH01_110037200"/>
<dbReference type="VEuPathDB" id="PlasmoDB:PfKH02_110038100"/>
<dbReference type="VEuPathDB" id="PlasmoDB:PfML01_110037700"/>
<dbReference type="VEuPathDB" id="PlasmoDB:PfNF135_110035900"/>
<dbReference type="VEuPathDB" id="PlasmoDB:PfNF166_110036100"/>
<dbReference type="VEuPathDB" id="PlasmoDB:PfNF54_110037000"/>
<dbReference type="VEuPathDB" id="PlasmoDB:PfSD01_110035500"/>
<dbReference type="VEuPathDB" id="PlasmoDB:PfSN01_110036000"/>
<dbReference type="VEuPathDB" id="PlasmoDB:PfTG01_110037300"/>
<dbReference type="HOGENOM" id="CLU_020019_9_1_1"/>
<dbReference type="InParanoid" id="Q8II36"/>
<dbReference type="OMA" id="WGFAVLT"/>
<dbReference type="OrthoDB" id="3222at2759"/>
<dbReference type="PhylomeDB" id="Q8II36"/>
<dbReference type="Reactome" id="R-PFA-432030">
    <property type="pathway name" value="Transport of glycerol from adipocytes to the liver by Aquaporins"/>
</dbReference>
<dbReference type="Reactome" id="R-PFA-432040">
    <property type="pathway name" value="Vasopressin regulates renal water homeostasis via Aquaporins"/>
</dbReference>
<dbReference type="Reactome" id="R-PFA-432047">
    <property type="pathway name" value="Passive transport by Aquaporins"/>
</dbReference>
<dbReference type="EvolutionaryTrace" id="Q8II36"/>
<dbReference type="Proteomes" id="UP000001450">
    <property type="component" value="Chromosome 11"/>
</dbReference>
<dbReference type="GO" id="GO:0016020">
    <property type="term" value="C:membrane"/>
    <property type="evidence" value="ECO:0000314"/>
    <property type="project" value="UniProtKB"/>
</dbReference>
<dbReference type="GO" id="GO:0005886">
    <property type="term" value="C:plasma membrane"/>
    <property type="evidence" value="ECO:0000318"/>
    <property type="project" value="GO_Central"/>
</dbReference>
<dbReference type="GO" id="GO:0008519">
    <property type="term" value="F:ammonium channel activity"/>
    <property type="evidence" value="ECO:0000314"/>
    <property type="project" value="GeneDB"/>
</dbReference>
<dbReference type="GO" id="GO:0015254">
    <property type="term" value="F:glycerol channel activity"/>
    <property type="evidence" value="ECO:0000314"/>
    <property type="project" value="UniProtKB"/>
</dbReference>
<dbReference type="GO" id="GO:0015168">
    <property type="term" value="F:glycerol transmembrane transporter activity"/>
    <property type="evidence" value="ECO:0000314"/>
    <property type="project" value="UniProtKB"/>
</dbReference>
<dbReference type="GO" id="GO:0042802">
    <property type="term" value="F:identical protein binding"/>
    <property type="evidence" value="ECO:0000353"/>
    <property type="project" value="IntAct"/>
</dbReference>
<dbReference type="GO" id="GO:0015166">
    <property type="term" value="F:polyol transmembrane transporter activity"/>
    <property type="evidence" value="ECO:0000314"/>
    <property type="project" value="UniProtKB"/>
</dbReference>
<dbReference type="GO" id="GO:0015204">
    <property type="term" value="F:urea transmembrane transporter activity"/>
    <property type="evidence" value="ECO:0000314"/>
    <property type="project" value="UniProtKB"/>
</dbReference>
<dbReference type="GO" id="GO:0015250">
    <property type="term" value="F:water channel activity"/>
    <property type="evidence" value="ECO:0000314"/>
    <property type="project" value="UniProtKB"/>
</dbReference>
<dbReference type="GO" id="GO:0051475">
    <property type="term" value="P:glucosylglycerol transmembrane transport"/>
    <property type="evidence" value="ECO:0000314"/>
    <property type="project" value="GeneDB"/>
</dbReference>
<dbReference type="GO" id="GO:0015793">
    <property type="term" value="P:glycerol transmembrane transport"/>
    <property type="evidence" value="ECO:0000314"/>
    <property type="project" value="UniProtKB"/>
</dbReference>
<dbReference type="GO" id="GO:0009247">
    <property type="term" value="P:glycolipid biosynthetic process"/>
    <property type="evidence" value="ECO:0000304"/>
    <property type="project" value="GeneDB"/>
</dbReference>
<dbReference type="GO" id="GO:0015791">
    <property type="term" value="P:polyol transmembrane transport"/>
    <property type="evidence" value="ECO:0000314"/>
    <property type="project" value="GeneDB"/>
</dbReference>
<dbReference type="GO" id="GO:0071918">
    <property type="term" value="P:urea transmembrane transport"/>
    <property type="evidence" value="ECO:0000314"/>
    <property type="project" value="UniProtKB"/>
</dbReference>
<dbReference type="GO" id="GO:0006833">
    <property type="term" value="P:water transport"/>
    <property type="evidence" value="ECO:0000314"/>
    <property type="project" value="UniProtKB"/>
</dbReference>
<dbReference type="FunFam" id="1.20.1080.10:FF:000034">
    <property type="entry name" value="Aquaglyceroporin"/>
    <property type="match status" value="1"/>
</dbReference>
<dbReference type="Gene3D" id="1.20.1080.10">
    <property type="entry name" value="Glycerol uptake facilitator protein"/>
    <property type="match status" value="1"/>
</dbReference>
<dbReference type="InterPro" id="IPR023271">
    <property type="entry name" value="Aquaporin-like"/>
</dbReference>
<dbReference type="InterPro" id="IPR000425">
    <property type="entry name" value="MIP"/>
</dbReference>
<dbReference type="InterPro" id="IPR050363">
    <property type="entry name" value="MIP/Aquaporin"/>
</dbReference>
<dbReference type="PANTHER" id="PTHR43829">
    <property type="entry name" value="AQUAPORIN OR AQUAGLYCEROPORIN RELATED"/>
    <property type="match status" value="1"/>
</dbReference>
<dbReference type="PANTHER" id="PTHR43829:SF9">
    <property type="entry name" value="AQUAPORIN-9"/>
    <property type="match status" value="1"/>
</dbReference>
<dbReference type="Pfam" id="PF00230">
    <property type="entry name" value="MIP"/>
    <property type="match status" value="1"/>
</dbReference>
<dbReference type="PRINTS" id="PR00783">
    <property type="entry name" value="MINTRINSICP"/>
</dbReference>
<dbReference type="SUPFAM" id="SSF81338">
    <property type="entry name" value="Aquaporin-like"/>
    <property type="match status" value="1"/>
</dbReference>